<name>CYPH_YEAST</name>
<accession>P14832</accession>
<accession>D6VSD6</accession>
<sequence>MSQVYFDVEADGQPIGRVVFKLYNDIVPKTAENFRALCTGEKGFGYAGSPFHRVIPDFMLQGGDFTAGNGTGGKSIYGGKFPDENFKKHHDRPGLLSMANAGPNTNGSQFFITTVPCPWLDGKHVVFGEVVDGYDIVKKVESLGSPSGATKARIVVAKSGEL</sequence>
<keyword id="KW-0002">3D-structure</keyword>
<keyword id="KW-0007">Acetylation</keyword>
<keyword id="KW-0963">Cytoplasm</keyword>
<keyword id="KW-0903">Direct protein sequencing</keyword>
<keyword id="KW-0413">Isomerase</keyword>
<keyword id="KW-1017">Isopeptide bond</keyword>
<keyword id="KW-0496">Mitochondrion</keyword>
<keyword id="KW-0539">Nucleus</keyword>
<keyword id="KW-0597">Phosphoprotein</keyword>
<keyword id="KW-0653">Protein transport</keyword>
<keyword id="KW-1185">Reference proteome</keyword>
<keyword id="KW-0697">Rotamase</keyword>
<keyword id="KW-0813">Transport</keyword>
<keyword id="KW-0832">Ubl conjugation</keyword>
<dbReference type="EC" id="5.2.1.8"/>
<dbReference type="EMBL" id="X17505">
    <property type="protein sequence ID" value="CAA35545.1"/>
    <property type="molecule type" value="mRNA"/>
</dbReference>
<dbReference type="EMBL" id="M30513">
    <property type="protein sequence ID" value="AAA34528.1"/>
    <property type="molecule type" value="Genomic_DNA"/>
</dbReference>
<dbReference type="EMBL" id="Z50046">
    <property type="protein sequence ID" value="CAA90376.1"/>
    <property type="molecule type" value="Genomic_DNA"/>
</dbReference>
<dbReference type="EMBL" id="AY557665">
    <property type="protein sequence ID" value="AAS55991.1"/>
    <property type="molecule type" value="Genomic_DNA"/>
</dbReference>
<dbReference type="EMBL" id="BK006938">
    <property type="protein sequence ID" value="DAA11996.1"/>
    <property type="molecule type" value="Genomic_DNA"/>
</dbReference>
<dbReference type="PIR" id="S25443">
    <property type="entry name" value="CSBY"/>
</dbReference>
<dbReference type="RefSeq" id="NP_010439.1">
    <property type="nucleotide sequence ID" value="NM_001180462.1"/>
</dbReference>
<dbReference type="PDB" id="1IST">
    <property type="method" value="X-ray"/>
    <property type="resolution" value="1.90 A"/>
    <property type="chains" value="A/B=1-162"/>
</dbReference>
<dbReference type="PDB" id="1VDN">
    <property type="method" value="X-ray"/>
    <property type="resolution" value="1.60 A"/>
    <property type="chains" value="A=1-162"/>
</dbReference>
<dbReference type="PDB" id="9CF0">
    <property type="method" value="EM"/>
    <property type="resolution" value="3.47 A"/>
    <property type="chains" value="C=1-162"/>
</dbReference>
<dbReference type="PDB" id="9CF1">
    <property type="method" value="EM"/>
    <property type="resolution" value="3.52 A"/>
    <property type="chains" value="C=1-162"/>
</dbReference>
<dbReference type="PDB" id="9CF2">
    <property type="method" value="EM"/>
    <property type="resolution" value="3.15 A"/>
    <property type="chains" value="C=1-162"/>
</dbReference>
<dbReference type="PDB" id="9CF3">
    <property type="method" value="EM"/>
    <property type="resolution" value="3.20 A"/>
    <property type="chains" value="C=1-162"/>
</dbReference>
<dbReference type="PDBsum" id="1IST"/>
<dbReference type="PDBsum" id="1VDN"/>
<dbReference type="PDBsum" id="9CF0"/>
<dbReference type="PDBsum" id="9CF1"/>
<dbReference type="PDBsum" id="9CF2"/>
<dbReference type="PDBsum" id="9CF3"/>
<dbReference type="EMDB" id="EMD-45525"/>
<dbReference type="EMDB" id="EMD-45526"/>
<dbReference type="EMDB" id="EMD-45527"/>
<dbReference type="EMDB" id="EMD-45528"/>
<dbReference type="SMR" id="P14832"/>
<dbReference type="BioGRID" id="32207">
    <property type="interactions" value="243"/>
</dbReference>
<dbReference type="ComplexPortal" id="CPX-1342">
    <property type="entry name" value="SET3C histone deacetylase complex"/>
</dbReference>
<dbReference type="DIP" id="DIP-5203N"/>
<dbReference type="FunCoup" id="P14832">
    <property type="interactions" value="856"/>
</dbReference>
<dbReference type="IntAct" id="P14832">
    <property type="interactions" value="126"/>
</dbReference>
<dbReference type="MINT" id="P14832"/>
<dbReference type="STRING" id="4932.YDR155C"/>
<dbReference type="iPTMnet" id="P14832"/>
<dbReference type="PaxDb" id="4932-YDR155C"/>
<dbReference type="PeptideAtlas" id="P14832"/>
<dbReference type="TopDownProteomics" id="P14832"/>
<dbReference type="EnsemblFungi" id="YDR155C_mRNA">
    <property type="protein sequence ID" value="YDR155C"/>
    <property type="gene ID" value="YDR155C"/>
</dbReference>
<dbReference type="GeneID" id="851733"/>
<dbReference type="KEGG" id="sce:YDR155C"/>
<dbReference type="AGR" id="SGD:S000002562"/>
<dbReference type="SGD" id="S000002562">
    <property type="gene designation" value="CPR1"/>
</dbReference>
<dbReference type="VEuPathDB" id="FungiDB:YDR155C"/>
<dbReference type="eggNOG" id="KOG0865">
    <property type="taxonomic scope" value="Eukaryota"/>
</dbReference>
<dbReference type="GeneTree" id="ENSGT00940000176670"/>
<dbReference type="HOGENOM" id="CLU_012062_4_3_1"/>
<dbReference type="InParanoid" id="P14832"/>
<dbReference type="OMA" id="TWLTGKH"/>
<dbReference type="OrthoDB" id="193499at2759"/>
<dbReference type="BioCyc" id="YEAST:YDR155C-MONOMER"/>
<dbReference type="BioGRID-ORCS" id="851733">
    <property type="hits" value="1 hit in 10 CRISPR screens"/>
</dbReference>
<dbReference type="CD-CODE" id="E03F929F">
    <property type="entry name" value="Stress granule"/>
</dbReference>
<dbReference type="ChiTaRS" id="CPR1">
    <property type="organism name" value="yeast"/>
</dbReference>
<dbReference type="EvolutionaryTrace" id="P14832"/>
<dbReference type="PRO" id="PR:P14832"/>
<dbReference type="Proteomes" id="UP000002311">
    <property type="component" value="Chromosome IV"/>
</dbReference>
<dbReference type="RNAct" id="P14832">
    <property type="molecule type" value="protein"/>
</dbReference>
<dbReference type="GO" id="GO:0005737">
    <property type="term" value="C:cytoplasm"/>
    <property type="evidence" value="ECO:0000318"/>
    <property type="project" value="GO_Central"/>
</dbReference>
<dbReference type="GO" id="GO:0005758">
    <property type="term" value="C:mitochondrial intermembrane space"/>
    <property type="evidence" value="ECO:0000314"/>
    <property type="project" value="SGD"/>
</dbReference>
<dbReference type="GO" id="GO:0005739">
    <property type="term" value="C:mitochondrion"/>
    <property type="evidence" value="ECO:0007005"/>
    <property type="project" value="SGD"/>
</dbReference>
<dbReference type="GO" id="GO:0005634">
    <property type="term" value="C:nucleus"/>
    <property type="evidence" value="ECO:0000314"/>
    <property type="project" value="ComplexPortal"/>
</dbReference>
<dbReference type="GO" id="GO:0034967">
    <property type="term" value="C:Set3 complex"/>
    <property type="evidence" value="ECO:0000314"/>
    <property type="project" value="SGD"/>
</dbReference>
<dbReference type="GO" id="GO:0016018">
    <property type="term" value="F:cyclosporin A binding"/>
    <property type="evidence" value="ECO:0000315"/>
    <property type="project" value="SGD"/>
</dbReference>
<dbReference type="GO" id="GO:0003729">
    <property type="term" value="F:mRNA binding"/>
    <property type="evidence" value="ECO:0007005"/>
    <property type="project" value="SGD"/>
</dbReference>
<dbReference type="GO" id="GO:0003755">
    <property type="term" value="F:peptidyl-prolyl cis-trans isomerase activity"/>
    <property type="evidence" value="ECO:0000314"/>
    <property type="project" value="SGD"/>
</dbReference>
<dbReference type="GO" id="GO:0030437">
    <property type="term" value="P:ascospore formation"/>
    <property type="evidence" value="ECO:0000315"/>
    <property type="project" value="SGD"/>
</dbReference>
<dbReference type="GO" id="GO:0009267">
    <property type="term" value="P:cellular response to starvation"/>
    <property type="evidence" value="ECO:0000303"/>
    <property type="project" value="ComplexPortal"/>
</dbReference>
<dbReference type="GO" id="GO:0006974">
    <property type="term" value="P:DNA damage response"/>
    <property type="evidence" value="ECO:0000303"/>
    <property type="project" value="ComplexPortal"/>
</dbReference>
<dbReference type="GO" id="GO:0045835">
    <property type="term" value="P:negative regulation of meiotic nuclear division"/>
    <property type="evidence" value="ECO:0000314"/>
    <property type="project" value="ComplexPortal"/>
</dbReference>
<dbReference type="GO" id="GO:0045836">
    <property type="term" value="P:positive regulation of meiotic nuclear division"/>
    <property type="evidence" value="ECO:0000315"/>
    <property type="project" value="SGD"/>
</dbReference>
<dbReference type="GO" id="GO:0006457">
    <property type="term" value="P:protein folding"/>
    <property type="evidence" value="ECO:0000318"/>
    <property type="project" value="GO_Central"/>
</dbReference>
<dbReference type="GO" id="GO:0015031">
    <property type="term" value="P:protein transport"/>
    <property type="evidence" value="ECO:0007669"/>
    <property type="project" value="UniProtKB-KW"/>
</dbReference>
<dbReference type="CDD" id="cd01926">
    <property type="entry name" value="cyclophilin_ABH_like"/>
    <property type="match status" value="1"/>
</dbReference>
<dbReference type="FunFam" id="2.40.100.10:FF:000013">
    <property type="entry name" value="Peptidyl-prolyl cis-trans isomerase"/>
    <property type="match status" value="1"/>
</dbReference>
<dbReference type="Gene3D" id="2.40.100.10">
    <property type="entry name" value="Cyclophilin-like"/>
    <property type="match status" value="1"/>
</dbReference>
<dbReference type="InterPro" id="IPR029000">
    <property type="entry name" value="Cyclophilin-like_dom_sf"/>
</dbReference>
<dbReference type="InterPro" id="IPR024936">
    <property type="entry name" value="Cyclophilin-type_PPIase"/>
</dbReference>
<dbReference type="InterPro" id="IPR020892">
    <property type="entry name" value="Cyclophilin-type_PPIase_CS"/>
</dbReference>
<dbReference type="InterPro" id="IPR002130">
    <property type="entry name" value="Cyclophilin-type_PPIase_dom"/>
</dbReference>
<dbReference type="PANTHER" id="PTHR11071">
    <property type="entry name" value="PEPTIDYL-PROLYL CIS-TRANS ISOMERASE"/>
    <property type="match status" value="1"/>
</dbReference>
<dbReference type="PANTHER" id="PTHR11071:SF561">
    <property type="entry name" value="PEPTIDYL-PROLYL CIS-TRANS ISOMERASE D-RELATED"/>
    <property type="match status" value="1"/>
</dbReference>
<dbReference type="Pfam" id="PF00160">
    <property type="entry name" value="Pro_isomerase"/>
    <property type="match status" value="1"/>
</dbReference>
<dbReference type="PIRSF" id="PIRSF001467">
    <property type="entry name" value="Peptidylpro_ismrse"/>
    <property type="match status" value="1"/>
</dbReference>
<dbReference type="PRINTS" id="PR00153">
    <property type="entry name" value="CSAPPISMRASE"/>
</dbReference>
<dbReference type="SUPFAM" id="SSF50891">
    <property type="entry name" value="Cyclophilin-like"/>
    <property type="match status" value="1"/>
</dbReference>
<dbReference type="PROSITE" id="PS00170">
    <property type="entry name" value="CSA_PPIASE_1"/>
    <property type="match status" value="1"/>
</dbReference>
<dbReference type="PROSITE" id="PS50072">
    <property type="entry name" value="CSA_PPIASE_2"/>
    <property type="match status" value="1"/>
</dbReference>
<proteinExistence type="evidence at protein level"/>
<organism>
    <name type="scientific">Saccharomyces cerevisiae (strain ATCC 204508 / S288c)</name>
    <name type="common">Baker's yeast</name>
    <dbReference type="NCBI Taxonomy" id="559292"/>
    <lineage>
        <taxon>Eukaryota</taxon>
        <taxon>Fungi</taxon>
        <taxon>Dikarya</taxon>
        <taxon>Ascomycota</taxon>
        <taxon>Saccharomycotina</taxon>
        <taxon>Saccharomycetes</taxon>
        <taxon>Saccharomycetales</taxon>
        <taxon>Saccharomycetaceae</taxon>
        <taxon>Saccharomyces</taxon>
    </lineage>
</organism>
<comment type="function">
    <text evidence="3 6 10">PPIases accelerate the folding of proteins. It catalyzes the cis-trans isomerization of proline imidic peptide bonds in oligopeptides. Involved in histone deacetylase complexes, suggesting a function in chromatin. Imports fructose-1,6-bisphosphatase (FBPase) into the intermediate vacuole import and degradation (Vid) vesicles. Regulates the meiotic gene program via the Set3C histone deacetylase complex to promote efficient sporulation, and the prolyl-isomerase activity is required for this function.</text>
</comment>
<comment type="catalytic activity">
    <reaction evidence="10">
        <text>[protein]-peptidylproline (omega=180) = [protein]-peptidylproline (omega=0)</text>
        <dbReference type="Rhea" id="RHEA:16237"/>
        <dbReference type="Rhea" id="RHEA-COMP:10747"/>
        <dbReference type="Rhea" id="RHEA-COMP:10748"/>
        <dbReference type="ChEBI" id="CHEBI:83833"/>
        <dbReference type="ChEBI" id="CHEBI:83834"/>
        <dbReference type="EC" id="5.2.1.8"/>
    </reaction>
</comment>
<comment type="activity regulation">
    <text>Binds cyclosporin A (CsA). CsA mediates some of its effects via an inhibitory action on PPIase.</text>
</comment>
<comment type="subunit">
    <text evidence="2 4 6">Interacts with a complex composed of SIN3 and RPD3. Identified in the Set3C complex with HOS2, HST1, SNT1, SIF2, HOS4/YIL112W and SET3.</text>
</comment>
<comment type="subcellular location">
    <subcellularLocation>
        <location evidence="6">Cytoplasm</location>
    </subcellularLocation>
    <subcellularLocation>
        <location evidence="6">Nucleus</location>
    </subcellularLocation>
    <subcellularLocation>
        <location evidence="7 8">Mitochondrion intermembrane space</location>
    </subcellularLocation>
</comment>
<comment type="miscellaneous">
    <text evidence="5">Present with 86000 molecules/cell in log phase SD medium.</text>
</comment>
<comment type="similarity">
    <text evidence="11">Belongs to the cyclophilin-type PPIase family. PPIase A subfamily.</text>
</comment>
<evidence type="ECO:0000255" key="1">
    <source>
        <dbReference type="PROSITE-ProRule" id="PRU00156"/>
    </source>
</evidence>
<evidence type="ECO:0000269" key="2">
    <source>
    </source>
</evidence>
<evidence type="ECO:0000269" key="3">
    <source>
    </source>
</evidence>
<evidence type="ECO:0000269" key="4">
    <source>
    </source>
</evidence>
<evidence type="ECO:0000269" key="5">
    <source>
    </source>
</evidence>
<evidence type="ECO:0000269" key="6">
    <source>
    </source>
</evidence>
<evidence type="ECO:0000269" key="7">
    <source>
    </source>
</evidence>
<evidence type="ECO:0000269" key="8">
    <source>
    </source>
</evidence>
<evidence type="ECO:0000269" key="9">
    <source>
    </source>
</evidence>
<evidence type="ECO:0000269" key="10">
    <source>
    </source>
</evidence>
<evidence type="ECO:0000305" key="11"/>
<evidence type="ECO:0007744" key="12">
    <source>
    </source>
</evidence>
<evidence type="ECO:0007744" key="13">
    <source>
    </source>
</evidence>
<evidence type="ECO:0007744" key="14">
    <source>
    </source>
</evidence>
<evidence type="ECO:0007744" key="15">
    <source>
    </source>
</evidence>
<evidence type="ECO:0007744" key="16">
    <source>
    </source>
</evidence>
<evidence type="ECO:0007744" key="17">
    <source>
    </source>
</evidence>
<evidence type="ECO:0007829" key="18">
    <source>
        <dbReference type="PDB" id="1VDN"/>
    </source>
</evidence>
<feature type="initiator methionine" description="Removed" evidence="9 17">
    <location>
        <position position="1"/>
    </location>
</feature>
<feature type="chain" id="PRO_0000064132" description="Peptidyl-prolyl cis-trans isomerase">
    <location>
        <begin position="2"/>
        <end position="162"/>
    </location>
</feature>
<feature type="domain" description="PPIase cyclophilin-type" evidence="1">
    <location>
        <begin position="5"/>
        <end position="161"/>
    </location>
</feature>
<feature type="modified residue" description="N-acetylserine" evidence="9 10 17">
    <location>
        <position position="2"/>
    </location>
</feature>
<feature type="modified residue" description="Phosphothreonine" evidence="14">
    <location>
        <position position="71"/>
    </location>
</feature>
<feature type="modified residue" description="Phosphoserine" evidence="14">
    <location>
        <position position="142"/>
    </location>
</feature>
<feature type="modified residue" description="Phosphoserine" evidence="12 13 14 15">
    <location>
        <position position="145"/>
    </location>
</feature>
<feature type="cross-link" description="Glycyl lysine isopeptide (Lys-Gly) (interchain with G-Cter in ubiquitin)" evidence="16">
    <location>
        <position position="29"/>
    </location>
</feature>
<feature type="cross-link" description="Glycyl lysine isopeptide (Lys-Gly) (interchain with G-Cter in ubiquitin)" evidence="16">
    <location>
        <position position="42"/>
    </location>
</feature>
<feature type="cross-link" description="Glycyl lysine isopeptide (Lys-Gly) (interchain with G-Cter in ubiquitin)" evidence="16">
    <location>
        <position position="123"/>
    </location>
</feature>
<feature type="cross-link" description="Glycyl lysine isopeptide (Lys-Gly) (interchain with G-Cter in ubiquitin)" evidence="16">
    <location>
        <position position="139"/>
    </location>
</feature>
<feature type="cross-link" description="Glycyl lysine isopeptide (Lys-Gly) (interchain with G-Cter in ubiquitin)" evidence="16">
    <location>
        <position position="151"/>
    </location>
</feature>
<feature type="cross-link" description="Glycyl lysine isopeptide (Lys-Gly) (interchain with G-Cter in ubiquitin)" evidence="16">
    <location>
        <position position="158"/>
    </location>
</feature>
<feature type="strand" evidence="18">
    <location>
        <begin position="3"/>
        <end position="10"/>
    </location>
</feature>
<feature type="strand" evidence="18">
    <location>
        <begin position="13"/>
        <end position="22"/>
    </location>
</feature>
<feature type="turn" evidence="18">
    <location>
        <begin position="24"/>
        <end position="26"/>
    </location>
</feature>
<feature type="helix" evidence="18">
    <location>
        <begin position="28"/>
        <end position="39"/>
    </location>
</feature>
<feature type="turn" evidence="18">
    <location>
        <begin position="40"/>
        <end position="42"/>
    </location>
</feature>
<feature type="strand" evidence="18">
    <location>
        <begin position="53"/>
        <end position="55"/>
    </location>
</feature>
<feature type="turn" evidence="18">
    <location>
        <begin position="56"/>
        <end position="58"/>
    </location>
</feature>
<feature type="strand" evidence="18">
    <location>
        <begin position="59"/>
        <end position="62"/>
    </location>
</feature>
<feature type="turn" evidence="18">
    <location>
        <begin position="65"/>
        <end position="67"/>
    </location>
</feature>
<feature type="strand" evidence="18">
    <location>
        <begin position="68"/>
        <end position="71"/>
    </location>
</feature>
<feature type="strand" evidence="18">
    <location>
        <begin position="92"/>
        <end position="98"/>
    </location>
</feature>
<feature type="strand" evidence="18">
    <location>
        <begin position="100"/>
        <end position="102"/>
    </location>
</feature>
<feature type="strand" evidence="18">
    <location>
        <begin position="110"/>
        <end position="115"/>
    </location>
</feature>
<feature type="helix" evidence="18">
    <location>
        <begin position="118"/>
        <end position="120"/>
    </location>
</feature>
<feature type="turn" evidence="18">
    <location>
        <begin position="121"/>
        <end position="123"/>
    </location>
</feature>
<feature type="strand" evidence="18">
    <location>
        <begin position="126"/>
        <end position="132"/>
    </location>
</feature>
<feature type="helix" evidence="18">
    <location>
        <begin position="134"/>
        <end position="141"/>
    </location>
</feature>
<feature type="strand" evidence="18">
    <location>
        <begin position="154"/>
        <end position="161"/>
    </location>
</feature>
<protein>
    <recommendedName>
        <fullName>Peptidyl-prolyl cis-trans isomerase</fullName>
        <shortName>PPIase</shortName>
        <ecNumber>5.2.1.8</ecNumber>
    </recommendedName>
    <alternativeName>
        <fullName>Cyclophilin</fullName>
        <shortName>CPH</shortName>
    </alternativeName>
    <alternativeName>
        <fullName>Cyclosporin A-binding protein</fullName>
    </alternativeName>
    <alternativeName>
        <fullName>PPI-II</fullName>
    </alternativeName>
    <alternativeName>
        <fullName>Rotamase</fullName>
    </alternativeName>
</protein>
<gene>
    <name type="primary">CPR1</name>
    <name type="synonym">CPH1</name>
    <name type="synonym">CYP1</name>
    <name type="synonym">SCC1</name>
    <name type="ordered locus">YDR155C</name>
    <name type="ORF">YD8358.10C</name>
</gene>
<reference key="1">
    <citation type="journal article" date="1990" name="Nucleic Acids Res.">
        <title>Nucleotide sequence of a full-length cDNA coding for cyclophilin (peptidyl-prolyl cis-trans isomerase) of Saccharomyces cerevisiae.</title>
        <authorList>
            <person name="Dietmeier K."/>
            <person name="Tropschug M."/>
        </authorList>
    </citation>
    <scope>NUCLEOTIDE SEQUENCE [MRNA]</scope>
</reference>
<reference key="2">
    <citation type="journal article" date="1989" name="Gene">
        <title>Yeast cyclophilin: isolation and characterization of the protein, cDNA and gene.</title>
        <authorList>
            <person name="Haendler B."/>
            <person name="Keller R."/>
            <person name="Hiestand P.C."/>
            <person name="Kocher H.P."/>
            <person name="Wegmann G."/>
            <person name="Movva N.R."/>
        </authorList>
    </citation>
    <scope>NUCLEOTIDE SEQUENCE [GENOMIC DNA]</scope>
    <scope>PROTEIN SEQUENCE OF 22-112 AND 120-151</scope>
    <scope>ACETYLATION AT SER-2</scope>
    <scope>CLEAVAGE OF INITIATOR METHIONINE</scope>
</reference>
<reference key="3">
    <citation type="journal article" date="1997" name="Nature">
        <title>The nucleotide sequence of Saccharomyces cerevisiae chromosome IV.</title>
        <authorList>
            <person name="Jacq C."/>
            <person name="Alt-Moerbe J."/>
            <person name="Andre B."/>
            <person name="Arnold W."/>
            <person name="Bahr A."/>
            <person name="Ballesta J.P.G."/>
            <person name="Bargues M."/>
            <person name="Baron L."/>
            <person name="Becker A."/>
            <person name="Biteau N."/>
            <person name="Bloecker H."/>
            <person name="Blugeon C."/>
            <person name="Boskovic J."/>
            <person name="Brandt P."/>
            <person name="Brueckner M."/>
            <person name="Buitrago M.J."/>
            <person name="Coster F."/>
            <person name="Delaveau T."/>
            <person name="del Rey F."/>
            <person name="Dujon B."/>
            <person name="Eide L.G."/>
            <person name="Garcia-Cantalejo J.M."/>
            <person name="Goffeau A."/>
            <person name="Gomez-Peris A."/>
            <person name="Granotier C."/>
            <person name="Hanemann V."/>
            <person name="Hankeln T."/>
            <person name="Hoheisel J.D."/>
            <person name="Jaeger W."/>
            <person name="Jimenez A."/>
            <person name="Jonniaux J.-L."/>
            <person name="Kraemer C."/>
            <person name="Kuester H."/>
            <person name="Laamanen P."/>
            <person name="Legros Y."/>
            <person name="Louis E.J."/>
            <person name="Moeller-Rieker S."/>
            <person name="Monnet A."/>
            <person name="Moro M."/>
            <person name="Mueller-Auer S."/>
            <person name="Nussbaumer B."/>
            <person name="Paricio N."/>
            <person name="Paulin L."/>
            <person name="Perea J."/>
            <person name="Perez-Alonso M."/>
            <person name="Perez-Ortin J.E."/>
            <person name="Pohl T.M."/>
            <person name="Prydz H."/>
            <person name="Purnelle B."/>
            <person name="Rasmussen S.W."/>
            <person name="Remacha M.A."/>
            <person name="Revuelta J.L."/>
            <person name="Rieger M."/>
            <person name="Salom D."/>
            <person name="Saluz H.P."/>
            <person name="Saiz J.E."/>
            <person name="Saren A.-M."/>
            <person name="Schaefer M."/>
            <person name="Scharfe M."/>
            <person name="Schmidt E.R."/>
            <person name="Schneider C."/>
            <person name="Scholler P."/>
            <person name="Schwarz S."/>
            <person name="Soler-Mira A."/>
            <person name="Urrestarazu L.A."/>
            <person name="Verhasselt P."/>
            <person name="Vissers S."/>
            <person name="Voet M."/>
            <person name="Volckaert G."/>
            <person name="Wagner G."/>
            <person name="Wambutt R."/>
            <person name="Wedler E."/>
            <person name="Wedler H."/>
            <person name="Woelfl S."/>
            <person name="Harris D.E."/>
            <person name="Bowman S."/>
            <person name="Brown D."/>
            <person name="Churcher C.M."/>
            <person name="Connor R."/>
            <person name="Dedman K."/>
            <person name="Gentles S."/>
            <person name="Hamlin N."/>
            <person name="Hunt S."/>
            <person name="Jones L."/>
            <person name="McDonald S."/>
            <person name="Murphy L.D."/>
            <person name="Niblett D."/>
            <person name="Odell C."/>
            <person name="Oliver K."/>
            <person name="Rajandream M.A."/>
            <person name="Richards C."/>
            <person name="Shore L."/>
            <person name="Walsh S.V."/>
            <person name="Barrell B.G."/>
            <person name="Dietrich F.S."/>
            <person name="Mulligan J.T."/>
            <person name="Allen E."/>
            <person name="Araujo R."/>
            <person name="Aviles E."/>
            <person name="Berno A."/>
            <person name="Carpenter J."/>
            <person name="Chen E."/>
            <person name="Cherry J.M."/>
            <person name="Chung E."/>
            <person name="Duncan M."/>
            <person name="Hunicke-Smith S."/>
            <person name="Hyman R.W."/>
            <person name="Komp C."/>
            <person name="Lashkari D."/>
            <person name="Lew H."/>
            <person name="Lin D."/>
            <person name="Mosedale D."/>
            <person name="Nakahara K."/>
            <person name="Namath A."/>
            <person name="Oefner P."/>
            <person name="Oh C."/>
            <person name="Petel F.X."/>
            <person name="Roberts D."/>
            <person name="Schramm S."/>
            <person name="Schroeder M."/>
            <person name="Shogren T."/>
            <person name="Shroff N."/>
            <person name="Winant A."/>
            <person name="Yelton M.A."/>
            <person name="Botstein D."/>
            <person name="Davis R.W."/>
            <person name="Johnston M."/>
            <person name="Andrews S."/>
            <person name="Brinkman R."/>
            <person name="Cooper J."/>
            <person name="Ding H."/>
            <person name="Du Z."/>
            <person name="Favello A."/>
            <person name="Fulton L."/>
            <person name="Gattung S."/>
            <person name="Greco T."/>
            <person name="Hallsworth K."/>
            <person name="Hawkins J."/>
            <person name="Hillier L.W."/>
            <person name="Jier M."/>
            <person name="Johnson D."/>
            <person name="Johnston L."/>
            <person name="Kirsten J."/>
            <person name="Kucaba T."/>
            <person name="Langston Y."/>
            <person name="Latreille P."/>
            <person name="Le T."/>
            <person name="Mardis E."/>
            <person name="Menezes S."/>
            <person name="Miller N."/>
            <person name="Nhan M."/>
            <person name="Pauley A."/>
            <person name="Peluso D."/>
            <person name="Rifkin L."/>
            <person name="Riles L."/>
            <person name="Taich A."/>
            <person name="Trevaskis E."/>
            <person name="Vignati D."/>
            <person name="Wilcox L."/>
            <person name="Wohldman P."/>
            <person name="Vaudin M."/>
            <person name="Wilson R."/>
            <person name="Waterston R."/>
            <person name="Albermann K."/>
            <person name="Hani J."/>
            <person name="Heumann K."/>
            <person name="Kleine K."/>
            <person name="Mewes H.-W."/>
            <person name="Zollner A."/>
            <person name="Zaccaria P."/>
        </authorList>
    </citation>
    <scope>NUCLEOTIDE SEQUENCE [LARGE SCALE GENOMIC DNA]</scope>
    <source>
        <strain>ATCC 204508 / S288c</strain>
    </source>
</reference>
<reference key="4">
    <citation type="journal article" date="2014" name="G3 (Bethesda)">
        <title>The reference genome sequence of Saccharomyces cerevisiae: Then and now.</title>
        <authorList>
            <person name="Engel S.R."/>
            <person name="Dietrich F.S."/>
            <person name="Fisk D.G."/>
            <person name="Binkley G."/>
            <person name="Balakrishnan R."/>
            <person name="Costanzo M.C."/>
            <person name="Dwight S.S."/>
            <person name="Hitz B.C."/>
            <person name="Karra K."/>
            <person name="Nash R.S."/>
            <person name="Weng S."/>
            <person name="Wong E.D."/>
            <person name="Lloyd P."/>
            <person name="Skrzypek M.S."/>
            <person name="Miyasato S.R."/>
            <person name="Simison M."/>
            <person name="Cherry J.M."/>
        </authorList>
    </citation>
    <scope>GENOME REANNOTATION</scope>
    <source>
        <strain>ATCC 204508 / S288c</strain>
    </source>
</reference>
<reference key="5">
    <citation type="journal article" date="2007" name="Genome Res.">
        <title>Approaching a complete repository of sequence-verified protein-encoding clones for Saccharomyces cerevisiae.</title>
        <authorList>
            <person name="Hu Y."/>
            <person name="Rolfs A."/>
            <person name="Bhullar B."/>
            <person name="Murthy T.V.S."/>
            <person name="Zhu C."/>
            <person name="Berger M.F."/>
            <person name="Camargo A.A."/>
            <person name="Kelley F."/>
            <person name="McCarron S."/>
            <person name="Jepson D."/>
            <person name="Richardson A."/>
            <person name="Raphael J."/>
            <person name="Moreira D."/>
            <person name="Taycher E."/>
            <person name="Zuo D."/>
            <person name="Mohr S."/>
            <person name="Kane M.F."/>
            <person name="Williamson J."/>
            <person name="Simpson A.J.G."/>
            <person name="Bulyk M.L."/>
            <person name="Harlow E."/>
            <person name="Marsischky G."/>
            <person name="Kolodner R.D."/>
            <person name="LaBaer J."/>
        </authorList>
    </citation>
    <scope>NUCLEOTIDE SEQUENCE [GENOMIC DNA]</scope>
    <source>
        <strain>ATCC 204508 / S288c</strain>
    </source>
</reference>
<reference key="6">
    <citation type="journal article" date="1993" name="Biochim. Biophys. Acta">
        <title>Purification and properties of multiple molecular forms of yeast peptidyl prolyl cis-trans isomerase.</title>
        <authorList>
            <person name="Hasumi H."/>
            <person name="Nishikawa T."/>
        </authorList>
    </citation>
    <scope>PARTIAL PROTEIN SEQUENCE OF 2-10; 30-37; 75-78; 81-85 AND 159-162</scope>
    <scope>FUNCTION</scope>
    <scope>CATALYTIC ACTIVITY</scope>
</reference>
<reference key="7">
    <citation type="journal article" date="2001" name="Genes Dev.">
        <title>The S. cerevisiae SET3 complex includes two histone deacetylases, Hos2 and Hst1, and is a meiotic-specific repressor of the sporulation gene program.</title>
        <authorList>
            <person name="Pijnappel W.W.M.P."/>
            <person name="Schaft D."/>
            <person name="Roguev A."/>
            <person name="Shevchenko A."/>
            <person name="Tekotte H."/>
            <person name="Wilm M."/>
            <person name="Rigaut G."/>
            <person name="Seraphin B."/>
            <person name="Aasland R."/>
            <person name="Stewart A.F."/>
        </authorList>
    </citation>
    <scope>IDENTIFICATION IN A COMPLEX WITH HOS2; HST1; SNT1; SIF2; YIL112W AND SET3</scope>
</reference>
<reference key="8">
    <citation type="journal article" date="2000" name="EMBO J.">
        <title>Cyclophilin A and Ess1 interact with and regulate silencing by the Sin3-Rpd3 histone deacetylase.</title>
        <authorList>
            <person name="Arevalo-Rodriguez M."/>
            <person name="Cardenas M.E."/>
            <person name="Wu X."/>
            <person name="Hanes S.D."/>
            <person name="Heitman J."/>
        </authorList>
    </citation>
    <scope>INTERACTION WITH RPD3</scope>
</reference>
<reference key="9">
    <citation type="journal article" date="2003" name="Nature">
        <title>Global analysis of protein expression in yeast.</title>
        <authorList>
            <person name="Ghaemmaghami S."/>
            <person name="Huh W.-K."/>
            <person name="Bower K."/>
            <person name="Howson R.W."/>
            <person name="Belle A."/>
            <person name="Dephoure N."/>
            <person name="O'Shea E.K."/>
            <person name="Weissman J.S."/>
        </authorList>
    </citation>
    <scope>LEVEL OF PROTEIN EXPRESSION [LARGE SCALE ANALYSIS]</scope>
</reference>
<reference key="10">
    <citation type="journal article" date="2001" name="J. Biol. Chem.">
        <title>Cyclophilin A mediates Vid22p function in the import of fructose-1,6-bisphosphatase into Vid vesicles.</title>
        <authorList>
            <person name="Brown C.R."/>
            <person name="Cui D.-Y."/>
            <person name="Hung G.G.-C."/>
            <person name="Chiang H.-L."/>
        </authorList>
    </citation>
    <scope>FUNCTION</scope>
</reference>
<reference key="11">
    <citation type="journal article" date="2005" name="Eukaryot. Cell">
        <title>Cyclophilin A is localized to the nucleus and controls meiosis in Saccharomyces cerevisiae.</title>
        <authorList>
            <person name="Arevalo-Rodriguez M."/>
            <person name="Heitman J."/>
        </authorList>
    </citation>
    <scope>FUNCTION</scope>
    <scope>SUBCELLULAR LOCATION</scope>
    <scope>IDENTIFICATION IN THE SET3C COMPLEX</scope>
    <scope>INTERACTION WITH SNT1 AND SIF2</scope>
</reference>
<reference key="12">
    <citation type="journal article" date="2006" name="J. Proteome Res.">
        <title>Toward the complete yeast mitochondrial proteome: multidimensional separation techniques for mitochondrial proteomics.</title>
        <authorList>
            <person name="Reinders J."/>
            <person name="Zahedi R.P."/>
            <person name="Pfanner N."/>
            <person name="Meisinger C."/>
            <person name="Sickmann A."/>
        </authorList>
    </citation>
    <scope>SUBCELLULAR LOCATION [LARGE SCALE ANALYSIS]</scope>
    <scope>IDENTIFICATION BY MASS SPECTROMETRY</scope>
</reference>
<reference key="13">
    <citation type="journal article" date="2007" name="J. Proteome Res.">
        <title>Large-scale phosphorylation analysis of alpha-factor-arrested Saccharomyces cerevisiae.</title>
        <authorList>
            <person name="Li X."/>
            <person name="Gerber S.A."/>
            <person name="Rudner A.D."/>
            <person name="Beausoleil S.A."/>
            <person name="Haas W."/>
            <person name="Villen J."/>
            <person name="Elias J.E."/>
            <person name="Gygi S.P."/>
        </authorList>
    </citation>
    <scope>PHOSPHORYLATION [LARGE SCALE ANALYSIS] AT SER-145</scope>
    <scope>IDENTIFICATION BY MASS SPECTROMETRY [LARGE SCALE ANALYSIS]</scope>
    <source>
        <strain>ADR376</strain>
    </source>
</reference>
<reference key="14">
    <citation type="journal article" date="2007" name="Proc. Natl. Acad. Sci. U.S.A.">
        <title>Analysis of phosphorylation sites on proteins from Saccharomyces cerevisiae by electron transfer dissociation (ETD) mass spectrometry.</title>
        <authorList>
            <person name="Chi A."/>
            <person name="Huttenhower C."/>
            <person name="Geer L.Y."/>
            <person name="Coon J.J."/>
            <person name="Syka J.E.P."/>
            <person name="Bai D.L."/>
            <person name="Shabanowitz J."/>
            <person name="Burke D.J."/>
            <person name="Troyanskaya O.G."/>
            <person name="Hunt D.F."/>
        </authorList>
    </citation>
    <scope>PHOSPHORYLATION [LARGE SCALE ANALYSIS] AT SER-145</scope>
    <scope>IDENTIFICATION BY MASS SPECTROMETRY [LARGE SCALE ANALYSIS]</scope>
</reference>
<reference key="15">
    <citation type="journal article" date="2008" name="Mol. Cell. Proteomics">
        <title>A multidimensional chromatography technology for in-depth phosphoproteome analysis.</title>
        <authorList>
            <person name="Albuquerque C.P."/>
            <person name="Smolka M.B."/>
            <person name="Payne S.H."/>
            <person name="Bafna V."/>
            <person name="Eng J."/>
            <person name="Zhou H."/>
        </authorList>
    </citation>
    <scope>PHOSPHORYLATION [LARGE SCALE ANALYSIS] AT THR-71; SER-142 AND SER-145</scope>
    <scope>IDENTIFICATION BY MASS SPECTROMETRY [LARGE SCALE ANALYSIS]</scope>
</reference>
<reference key="16">
    <citation type="journal article" date="2009" name="Science">
        <title>Global analysis of Cdk1 substrate phosphorylation sites provides insights into evolution.</title>
        <authorList>
            <person name="Holt L.J."/>
            <person name="Tuch B.B."/>
            <person name="Villen J."/>
            <person name="Johnson A.D."/>
            <person name="Gygi S.P."/>
            <person name="Morgan D.O."/>
        </authorList>
    </citation>
    <scope>PHOSPHORYLATION [LARGE SCALE ANALYSIS] AT SER-145</scope>
    <scope>IDENTIFICATION BY MASS SPECTROMETRY [LARGE SCALE ANALYSIS]</scope>
</reference>
<reference key="17">
    <citation type="journal article" date="2012" name="Mol. Cell. Proteomics">
        <title>Intermembrane space proteome of yeast mitochondria.</title>
        <authorList>
            <person name="Voegtle F.N."/>
            <person name="Burkhart J.M."/>
            <person name="Rao S."/>
            <person name="Gerbeth C."/>
            <person name="Hinrichs J."/>
            <person name="Martinou J.C."/>
            <person name="Chacinska A."/>
            <person name="Sickmann A."/>
            <person name="Zahedi R.P."/>
            <person name="Meisinger C."/>
        </authorList>
    </citation>
    <scope>IDENTIFICATION BY MASS SPECTROMETRY</scope>
    <scope>SUBCELLULAR LOCATION [LARGE SCALE ANALYSIS]</scope>
</reference>
<reference key="18">
    <citation type="journal article" date="2012" name="Proc. Natl. Acad. Sci. U.S.A.">
        <title>N-terminal acetylome analyses and functional insights of the N-terminal acetyltransferase NatB.</title>
        <authorList>
            <person name="Van Damme P."/>
            <person name="Lasa M."/>
            <person name="Polevoda B."/>
            <person name="Gazquez C."/>
            <person name="Elosegui-Artola A."/>
            <person name="Kim D.S."/>
            <person name="De Juan-Pardo E."/>
            <person name="Demeyer K."/>
            <person name="Hole K."/>
            <person name="Larrea E."/>
            <person name="Timmerman E."/>
            <person name="Prieto J."/>
            <person name="Arnesen T."/>
            <person name="Sherman F."/>
            <person name="Gevaert K."/>
            <person name="Aldabe R."/>
        </authorList>
    </citation>
    <scope>ACETYLATION [LARGE SCALE ANALYSIS] AT SER-2</scope>
    <scope>CLEAVAGE OF INITIATOR METHIONINE [LARGE SCALE ANALYSIS]</scope>
    <scope>IDENTIFICATION BY MASS SPECTROMETRY [LARGE SCALE ANALYSIS]</scope>
</reference>
<reference key="19">
    <citation type="journal article" date="2012" name="Proteomics">
        <title>Sites of ubiquitin attachment in Saccharomyces cerevisiae.</title>
        <authorList>
            <person name="Starita L.M."/>
            <person name="Lo R.S."/>
            <person name="Eng J.K."/>
            <person name="von Haller P.D."/>
            <person name="Fields S."/>
        </authorList>
    </citation>
    <scope>UBIQUITINATION [LARGE SCALE ANALYSIS] AT LYS-29; LYS-42; LYS-123; LYS-139; LYS-151 AND LYS-158</scope>
    <scope>IDENTIFICATION BY MASS SPECTROMETRY [LARGE SCALE ANALYSIS]</scope>
</reference>
<reference key="20">
    <citation type="submission" date="2001-12" db="PDB data bank">
        <title>Turns are essential in the folding of the globular beta-barrel structure of yeast cyclophilin A, CPR1.</title>
        <authorList>
            <person name="Kashima A."/>
            <person name="Yoshikawa-Fujioka S."/>
            <person name="Hayano T."/>
            <person name="Takahashi N."/>
            <person name="Konno M."/>
        </authorList>
    </citation>
    <scope>X-RAY CRYSTALLOGRAPHY (1.90 ANGSTROMS)</scope>
</reference>
<reference key="21">
    <citation type="submission" date="2004-03" db="PDB data bank">
        <title>Crystal structure of yeast cyclophilin A complexed with ACE-Ala-Ala-Pro-Ala-7-amino-4-methylcoumarin.</title>
        <authorList>
            <person name="Konno M."/>
            <person name="Shibano T."/>
            <person name="Okudaira K."/>
            <person name="Takahashi N."/>
        </authorList>
    </citation>
    <scope>X-RAY CRYSTALLOGRAPHY (1.60 ANGSTROMS)</scope>
</reference>